<keyword id="KW-0067">ATP-binding</keyword>
<keyword id="KW-0436">Ligase</keyword>
<keyword id="KW-0547">Nucleotide-binding</keyword>
<keyword id="KW-0648">Protein biosynthesis</keyword>
<sequence>MITKEEAQKIAKLARLKFEEDTVEKFFTQLSTIMDMIDILNEIDCKDIEPLTSVCNMNARMREDAVTSSDLSSELLDNVSGNSAQLAKEVKYFITPKVVE</sequence>
<dbReference type="EC" id="6.3.5.-" evidence="1"/>
<dbReference type="EMBL" id="AE006914">
    <property type="protein sequence ID" value="AAL02733.1"/>
    <property type="status" value="ALT_INIT"/>
    <property type="molecule type" value="Genomic_DNA"/>
</dbReference>
<dbReference type="PIR" id="C97724">
    <property type="entry name" value="C97724"/>
</dbReference>
<dbReference type="RefSeq" id="WP_010976864.1">
    <property type="nucleotide sequence ID" value="NC_003103.1"/>
</dbReference>
<dbReference type="SMR" id="Q92J74"/>
<dbReference type="GeneID" id="927996"/>
<dbReference type="KEGG" id="rco:RC0195"/>
<dbReference type="PATRIC" id="fig|272944.4.peg.225"/>
<dbReference type="HOGENOM" id="CLU_105899_2_0_5"/>
<dbReference type="Proteomes" id="UP000000816">
    <property type="component" value="Chromosome"/>
</dbReference>
<dbReference type="GO" id="GO:0050566">
    <property type="term" value="F:asparaginyl-tRNA synthase (glutamine-hydrolyzing) activity"/>
    <property type="evidence" value="ECO:0007669"/>
    <property type="project" value="RHEA"/>
</dbReference>
<dbReference type="GO" id="GO:0005524">
    <property type="term" value="F:ATP binding"/>
    <property type="evidence" value="ECO:0007669"/>
    <property type="project" value="UniProtKB-KW"/>
</dbReference>
<dbReference type="GO" id="GO:0050567">
    <property type="term" value="F:glutaminyl-tRNA synthase (glutamine-hydrolyzing) activity"/>
    <property type="evidence" value="ECO:0007669"/>
    <property type="project" value="UniProtKB-UniRule"/>
</dbReference>
<dbReference type="GO" id="GO:0070681">
    <property type="term" value="P:glutaminyl-tRNAGln biosynthesis via transamidation"/>
    <property type="evidence" value="ECO:0007669"/>
    <property type="project" value="TreeGrafter"/>
</dbReference>
<dbReference type="GO" id="GO:0006450">
    <property type="term" value="P:regulation of translational fidelity"/>
    <property type="evidence" value="ECO:0007669"/>
    <property type="project" value="InterPro"/>
</dbReference>
<dbReference type="GO" id="GO:0006412">
    <property type="term" value="P:translation"/>
    <property type="evidence" value="ECO:0007669"/>
    <property type="project" value="UniProtKB-UniRule"/>
</dbReference>
<dbReference type="Gene3D" id="1.10.20.60">
    <property type="entry name" value="Glu-tRNAGln amidotransferase C subunit, N-terminal domain"/>
    <property type="match status" value="1"/>
</dbReference>
<dbReference type="HAMAP" id="MF_00122">
    <property type="entry name" value="GatC"/>
    <property type="match status" value="1"/>
</dbReference>
<dbReference type="InterPro" id="IPR036113">
    <property type="entry name" value="Asp/Glu-ADT_sf_sub_c"/>
</dbReference>
<dbReference type="InterPro" id="IPR003837">
    <property type="entry name" value="GatC"/>
</dbReference>
<dbReference type="NCBIfam" id="TIGR00135">
    <property type="entry name" value="gatC"/>
    <property type="match status" value="1"/>
</dbReference>
<dbReference type="PANTHER" id="PTHR15004">
    <property type="entry name" value="GLUTAMYL-TRNA(GLN) AMIDOTRANSFERASE SUBUNIT C, MITOCHONDRIAL"/>
    <property type="match status" value="1"/>
</dbReference>
<dbReference type="PANTHER" id="PTHR15004:SF0">
    <property type="entry name" value="GLUTAMYL-TRNA(GLN) AMIDOTRANSFERASE SUBUNIT C, MITOCHONDRIAL"/>
    <property type="match status" value="1"/>
</dbReference>
<dbReference type="Pfam" id="PF02686">
    <property type="entry name" value="GatC"/>
    <property type="match status" value="1"/>
</dbReference>
<dbReference type="SUPFAM" id="SSF141000">
    <property type="entry name" value="Glu-tRNAGln amidotransferase C subunit"/>
    <property type="match status" value="1"/>
</dbReference>
<proteinExistence type="inferred from homology"/>
<accession>Q92J74</accession>
<evidence type="ECO:0000255" key="1">
    <source>
        <dbReference type="HAMAP-Rule" id="MF_00122"/>
    </source>
</evidence>
<evidence type="ECO:0000305" key="2"/>
<protein>
    <recommendedName>
        <fullName>Glutamyl-tRNA(Gln) amidotransferase subunit C</fullName>
        <shortName>Glu-ADT subunit C</shortName>
        <ecNumber evidence="1">6.3.5.-</ecNumber>
    </recommendedName>
</protein>
<gene>
    <name evidence="1" type="primary">gatC</name>
    <name type="ordered locus">RC0195</name>
</gene>
<reference key="1">
    <citation type="journal article" date="2001" name="Science">
        <title>Mechanisms of evolution in Rickettsia conorii and R. prowazekii.</title>
        <authorList>
            <person name="Ogata H."/>
            <person name="Audic S."/>
            <person name="Renesto-Audiffren P."/>
            <person name="Fournier P.-E."/>
            <person name="Barbe V."/>
            <person name="Samson D."/>
            <person name="Roux V."/>
            <person name="Cossart P."/>
            <person name="Weissenbach J."/>
            <person name="Claverie J.-M."/>
            <person name="Raoult D."/>
        </authorList>
    </citation>
    <scope>NUCLEOTIDE SEQUENCE [LARGE SCALE GENOMIC DNA]</scope>
    <source>
        <strain>ATCC VR-613 / Malish 7</strain>
    </source>
</reference>
<comment type="function">
    <text evidence="1">Allows the formation of correctly charged Asn-tRNA(Asn) or Gln-tRNA(Gln) through the transamidation of misacylated Asp-tRNA(Asn) or Glu-tRNA(Gln) in organisms which lack either or both of asparaginyl-tRNA or glutaminyl-tRNA synthetases. The reaction takes place in the presence of glutamine and ATP through an activated phospho-Asp-tRNA(Asn) or phospho-Glu-tRNA(Gln).</text>
</comment>
<comment type="catalytic activity">
    <reaction evidence="1">
        <text>L-glutamyl-tRNA(Gln) + L-glutamine + ATP + H2O = L-glutaminyl-tRNA(Gln) + L-glutamate + ADP + phosphate + H(+)</text>
        <dbReference type="Rhea" id="RHEA:17521"/>
        <dbReference type="Rhea" id="RHEA-COMP:9681"/>
        <dbReference type="Rhea" id="RHEA-COMP:9684"/>
        <dbReference type="ChEBI" id="CHEBI:15377"/>
        <dbReference type="ChEBI" id="CHEBI:15378"/>
        <dbReference type="ChEBI" id="CHEBI:29985"/>
        <dbReference type="ChEBI" id="CHEBI:30616"/>
        <dbReference type="ChEBI" id="CHEBI:43474"/>
        <dbReference type="ChEBI" id="CHEBI:58359"/>
        <dbReference type="ChEBI" id="CHEBI:78520"/>
        <dbReference type="ChEBI" id="CHEBI:78521"/>
        <dbReference type="ChEBI" id="CHEBI:456216"/>
    </reaction>
</comment>
<comment type="catalytic activity">
    <reaction evidence="1">
        <text>L-aspartyl-tRNA(Asn) + L-glutamine + ATP + H2O = L-asparaginyl-tRNA(Asn) + L-glutamate + ADP + phosphate + 2 H(+)</text>
        <dbReference type="Rhea" id="RHEA:14513"/>
        <dbReference type="Rhea" id="RHEA-COMP:9674"/>
        <dbReference type="Rhea" id="RHEA-COMP:9677"/>
        <dbReference type="ChEBI" id="CHEBI:15377"/>
        <dbReference type="ChEBI" id="CHEBI:15378"/>
        <dbReference type="ChEBI" id="CHEBI:29985"/>
        <dbReference type="ChEBI" id="CHEBI:30616"/>
        <dbReference type="ChEBI" id="CHEBI:43474"/>
        <dbReference type="ChEBI" id="CHEBI:58359"/>
        <dbReference type="ChEBI" id="CHEBI:78515"/>
        <dbReference type="ChEBI" id="CHEBI:78516"/>
        <dbReference type="ChEBI" id="CHEBI:456216"/>
    </reaction>
</comment>
<comment type="subunit">
    <text evidence="1">Heterotrimer of A, B and C subunits.</text>
</comment>
<comment type="similarity">
    <text evidence="1">Belongs to the GatC family.</text>
</comment>
<comment type="sequence caution" evidence="2">
    <conflict type="erroneous initiation">
        <sequence resource="EMBL-CDS" id="AAL02733"/>
    </conflict>
</comment>
<feature type="chain" id="PRO_0000105327" description="Glutamyl-tRNA(Gln) amidotransferase subunit C">
    <location>
        <begin position="1"/>
        <end position="100"/>
    </location>
</feature>
<name>GATC_RICCN</name>
<organism>
    <name type="scientific">Rickettsia conorii (strain ATCC VR-613 / Malish 7)</name>
    <dbReference type="NCBI Taxonomy" id="272944"/>
    <lineage>
        <taxon>Bacteria</taxon>
        <taxon>Pseudomonadati</taxon>
        <taxon>Pseudomonadota</taxon>
        <taxon>Alphaproteobacteria</taxon>
        <taxon>Rickettsiales</taxon>
        <taxon>Rickettsiaceae</taxon>
        <taxon>Rickettsieae</taxon>
        <taxon>Rickettsia</taxon>
        <taxon>spotted fever group</taxon>
    </lineage>
</organism>